<organism>
    <name type="scientific">Aspergillus fumigatus (strain CBS 144.89 / FGSC A1163 / CEA10)</name>
    <name type="common">Neosartorya fumigata</name>
    <dbReference type="NCBI Taxonomy" id="451804"/>
    <lineage>
        <taxon>Eukaryota</taxon>
        <taxon>Fungi</taxon>
        <taxon>Dikarya</taxon>
        <taxon>Ascomycota</taxon>
        <taxon>Pezizomycotina</taxon>
        <taxon>Eurotiomycetes</taxon>
        <taxon>Eurotiomycetidae</taxon>
        <taxon>Eurotiales</taxon>
        <taxon>Aspergillaceae</taxon>
        <taxon>Aspergillus</taxon>
        <taxon>Aspergillus subgen. Fumigati</taxon>
    </lineage>
</organism>
<proteinExistence type="evidence at transcript level"/>
<sequence length="396" mass="43709">MANKKKPSIKKSVNEPNPHLKQSHASGSQQSLGDSLIEYNQPESSIPVCYIQNYPQFSDSYLYEPPFILSKVNEEVGHTVVHFLCTGNYETLRTASEPGASKIGIEFRRSMLVYQAAKEYDLYDLETYAKKYIEVFGESMSIFDIMEAAREIYSKLPKDEIWLTGYIYKQLEIAFSLDRNIFQRVDFYDGVGKDPNFDKDVMRMVVNIYSEVLSRQLDETTPEGSIAEDGAAEDCAAEDGAVEDGVVEEGAVEEGAVEEGAVEDGAVKDGAVEDGAVENGVAEECGAAEDVADDGALKEAVNLGIPSQPSGTALSFEWDHWTSGSKMGASFSGNSQWKYEKDTNSLYPENKAEESGGFNAAYEGIKSKKKKDKKKKKSNKDKKVEELAEPVPECGR</sequence>
<feature type="chain" id="PRO_0000460426" description="Subtelomeric hrmA-associated cluster protein AFUB_079040">
    <location>
        <begin position="1"/>
        <end position="396"/>
    </location>
</feature>
<feature type="region of interest" description="Disordered" evidence="1">
    <location>
        <begin position="1"/>
        <end position="32"/>
    </location>
</feature>
<feature type="region of interest" description="Disordered" evidence="1">
    <location>
        <begin position="347"/>
        <end position="396"/>
    </location>
</feature>
<feature type="compositionally biased region" description="Polar residues" evidence="1">
    <location>
        <begin position="23"/>
        <end position="32"/>
    </location>
</feature>
<feature type="compositionally biased region" description="Basic residues" evidence="1">
    <location>
        <begin position="367"/>
        <end position="380"/>
    </location>
</feature>
<protein>
    <recommendedName>
        <fullName evidence="3">Subtelomeric hrmA-associated cluster protein AFUB_079040</fullName>
    </recommendedName>
</protein>
<name>HAC6_ASPFC</name>
<keyword id="KW-0130">Cell adhesion</keyword>
<keyword id="KW-0843">Virulence</keyword>
<reference key="1">
    <citation type="journal article" date="2008" name="PLoS Genet.">
        <title>Genomic islands in the pathogenic filamentous fungus Aspergillus fumigatus.</title>
        <authorList>
            <person name="Fedorova N.D."/>
            <person name="Khaldi N."/>
            <person name="Joardar V.S."/>
            <person name="Maiti R."/>
            <person name="Amedeo P."/>
            <person name="Anderson M.J."/>
            <person name="Crabtree J."/>
            <person name="Silva J.C."/>
            <person name="Badger J.H."/>
            <person name="Albarraq A."/>
            <person name="Angiuoli S."/>
            <person name="Bussey H."/>
            <person name="Bowyer P."/>
            <person name="Cotty P.J."/>
            <person name="Dyer P.S."/>
            <person name="Egan A."/>
            <person name="Galens K."/>
            <person name="Fraser-Liggett C.M."/>
            <person name="Haas B.J."/>
            <person name="Inman J.M."/>
            <person name="Kent R."/>
            <person name="Lemieux S."/>
            <person name="Malavazi I."/>
            <person name="Orvis J."/>
            <person name="Roemer T."/>
            <person name="Ronning C.M."/>
            <person name="Sundaram J.P."/>
            <person name="Sutton G."/>
            <person name="Turner G."/>
            <person name="Venter J.C."/>
            <person name="White O.R."/>
            <person name="Whitty B.R."/>
            <person name="Youngman P."/>
            <person name="Wolfe K.H."/>
            <person name="Goldman G.H."/>
            <person name="Wortman J.R."/>
            <person name="Jiang B."/>
            <person name="Denning D.W."/>
            <person name="Nierman W.C."/>
        </authorList>
    </citation>
    <scope>NUCLEOTIDE SEQUENCE [LARGE SCALE GENOMIC DNA]</scope>
    <source>
        <strain>CBS 144.89 / FGSC A1163 / CEA10</strain>
    </source>
</reference>
<reference key="2">
    <citation type="journal article" date="2019" name="Nat. Microbiol.">
        <title>Fungal biofilm morphology impacts hypoxia fitness and disease progression.</title>
        <authorList>
            <person name="Kowalski C.H."/>
            <person name="Kerkaert J.D."/>
            <person name="Liu K.W."/>
            <person name="Bond M.C."/>
            <person name="Hartmann R."/>
            <person name="Nadell C.D."/>
            <person name="Stajich J.E."/>
            <person name="Cramer R.A."/>
        </authorList>
    </citation>
    <scope>FUNCTION</scope>
    <scope>INDUCTION</scope>
</reference>
<comment type="function">
    <text evidence="2">Part of the subtelomeric hrmA-associated cluster (HAC) containing genes that alter the hyphal surface (such as reduced total chitin or increased beta-glucan exposure) and perturb inter-hyphal interactions within the developing biofilms, resulting in a loss of vertically aligned polarized growing filaments (PubMed:31548684). Consequently, this hypoxia-typic morphotype (called H-MORPH) with altered biofilm architecture leads to increased hypoxia fitness, increased host inflammation, rapid disease progression, and mortality in a murine model of invasive aspergillosis (PubMed:31548684).</text>
</comment>
<comment type="induction">
    <text evidence="2">Expression is regulated by the hypoxia responsive morphology factor A (hrmA).</text>
</comment>
<dbReference type="EMBL" id="DS499599">
    <property type="protein sequence ID" value="EDP49871.1"/>
    <property type="molecule type" value="Genomic_DNA"/>
</dbReference>
<dbReference type="EnsemblFungi" id="EDP49871">
    <property type="protein sequence ID" value="EDP49871"/>
    <property type="gene ID" value="AFUB_079040"/>
</dbReference>
<dbReference type="VEuPathDB" id="FungiDB:AFUB_079040"/>
<dbReference type="HOGENOM" id="CLU_049464_0_0_1"/>
<dbReference type="OrthoDB" id="132621at5052"/>
<dbReference type="PhylomeDB" id="B0Y8Z0"/>
<dbReference type="Proteomes" id="UP000001699">
    <property type="component" value="Unassembled WGS sequence"/>
</dbReference>
<dbReference type="GO" id="GO:0007155">
    <property type="term" value="P:cell adhesion"/>
    <property type="evidence" value="ECO:0007669"/>
    <property type="project" value="UniProtKB-KW"/>
</dbReference>
<dbReference type="PANTHER" id="PTHR37538">
    <property type="entry name" value="BTB DOMAIN-CONTAINING PROTEIN"/>
    <property type="match status" value="1"/>
</dbReference>
<dbReference type="PANTHER" id="PTHR37538:SF1">
    <property type="entry name" value="BTB DOMAIN-CONTAINING PROTEIN"/>
    <property type="match status" value="1"/>
</dbReference>
<gene>
    <name type="ORF">AFUB_079040</name>
</gene>
<accession>B0Y8Z0</accession>
<evidence type="ECO:0000256" key="1">
    <source>
        <dbReference type="SAM" id="MobiDB-lite"/>
    </source>
</evidence>
<evidence type="ECO:0000269" key="2">
    <source>
    </source>
</evidence>
<evidence type="ECO:0000303" key="3">
    <source>
    </source>
</evidence>